<proteinExistence type="evidence at transcript level"/>
<evidence type="ECO:0000256" key="1">
    <source>
        <dbReference type="SAM" id="MobiDB-lite"/>
    </source>
</evidence>
<evidence type="ECO:0000305" key="2"/>
<gene>
    <name type="primary">TFT6</name>
</gene>
<sequence>MASPREENVYMAKLAEQAERYEEMVEFMEKVVAAADGAEELTVEERNLLSVAYKNVIGARRASWRIISSIEQKEESRGNEDHVASIKEYRSKIESELTSICNGILKLLDSKLIGSAATGDSKVFYLKMKGDYHRYLAEFKTGAERKEAAENTLSAYKAAQDIANAELAPTHPIRLGLALNFSVFYYEILNSPDRACNLAKQAFDEAIAELDTLGEESYKDSTLIMQLLRDNLTLWTSDMQDDGTDEIKEATPKPDDNE</sequence>
<keyword id="KW-1185">Reference proteome</keyword>
<organism>
    <name type="scientific">Solanum lycopersicum</name>
    <name type="common">Tomato</name>
    <name type="synonym">Lycopersicon esculentum</name>
    <dbReference type="NCBI Taxonomy" id="4081"/>
    <lineage>
        <taxon>Eukaryota</taxon>
        <taxon>Viridiplantae</taxon>
        <taxon>Streptophyta</taxon>
        <taxon>Embryophyta</taxon>
        <taxon>Tracheophyta</taxon>
        <taxon>Spermatophyta</taxon>
        <taxon>Magnoliopsida</taxon>
        <taxon>eudicotyledons</taxon>
        <taxon>Gunneridae</taxon>
        <taxon>Pentapetalae</taxon>
        <taxon>asterids</taxon>
        <taxon>lamiids</taxon>
        <taxon>Solanales</taxon>
        <taxon>Solanaceae</taxon>
        <taxon>Solanoideae</taxon>
        <taxon>Solaneae</taxon>
        <taxon>Solanum</taxon>
        <taxon>Solanum subgen. Lycopersicon</taxon>
    </lineage>
</organism>
<dbReference type="EMBL" id="X95904">
    <property type="protein sequence ID" value="CAA65149.2"/>
    <property type="molecule type" value="Genomic_DNA"/>
</dbReference>
<dbReference type="EMBL" id="AF079104">
    <property type="protein sequence ID" value="AAL04424.1"/>
    <property type="molecule type" value="mRNA"/>
</dbReference>
<dbReference type="PIR" id="T07389">
    <property type="entry name" value="T07389"/>
</dbReference>
<dbReference type="RefSeq" id="NP_001234097.1">
    <property type="nucleotide sequence ID" value="NM_001247168.2"/>
</dbReference>
<dbReference type="SMR" id="P93211"/>
<dbReference type="BioGRID" id="2309973">
    <property type="interactions" value="5"/>
</dbReference>
<dbReference type="FunCoup" id="P93211">
    <property type="interactions" value="3360"/>
</dbReference>
<dbReference type="STRING" id="4081.P93211"/>
<dbReference type="PaxDb" id="4081-Solyc11g010200.1.1"/>
<dbReference type="GeneID" id="543562"/>
<dbReference type="KEGG" id="sly:543562"/>
<dbReference type="eggNOG" id="KOG0841">
    <property type="taxonomic scope" value="Eukaryota"/>
</dbReference>
<dbReference type="InParanoid" id="P93211"/>
<dbReference type="OrthoDB" id="10260625at2759"/>
<dbReference type="Proteomes" id="UP000004994">
    <property type="component" value="Unplaced"/>
</dbReference>
<dbReference type="ExpressionAtlas" id="P93211">
    <property type="expression patterns" value="baseline and differential"/>
</dbReference>
<dbReference type="GO" id="GO:0005737">
    <property type="term" value="C:cytoplasm"/>
    <property type="evidence" value="ECO:0000318"/>
    <property type="project" value="GO_Central"/>
</dbReference>
<dbReference type="GO" id="GO:0008104">
    <property type="term" value="P:protein localization"/>
    <property type="evidence" value="ECO:0000318"/>
    <property type="project" value="GO_Central"/>
</dbReference>
<dbReference type="GO" id="GO:0007165">
    <property type="term" value="P:signal transduction"/>
    <property type="evidence" value="ECO:0000318"/>
    <property type="project" value="GO_Central"/>
</dbReference>
<dbReference type="FunFam" id="1.20.190.20:FF:000002">
    <property type="entry name" value="14-3-3 protein epsilon"/>
    <property type="match status" value="1"/>
</dbReference>
<dbReference type="Gene3D" id="1.20.190.20">
    <property type="entry name" value="14-3-3 domain"/>
    <property type="match status" value="1"/>
</dbReference>
<dbReference type="InterPro" id="IPR000308">
    <property type="entry name" value="14-3-3"/>
</dbReference>
<dbReference type="InterPro" id="IPR023409">
    <property type="entry name" value="14-3-3_CS"/>
</dbReference>
<dbReference type="InterPro" id="IPR036815">
    <property type="entry name" value="14-3-3_dom_sf"/>
</dbReference>
<dbReference type="InterPro" id="IPR023410">
    <property type="entry name" value="14-3-3_domain"/>
</dbReference>
<dbReference type="PANTHER" id="PTHR18860">
    <property type="entry name" value="14-3-3 PROTEIN"/>
    <property type="match status" value="1"/>
</dbReference>
<dbReference type="Pfam" id="PF00244">
    <property type="entry name" value="14-3-3"/>
    <property type="match status" value="1"/>
</dbReference>
<dbReference type="PIRSF" id="PIRSF000868">
    <property type="entry name" value="14-3-3"/>
    <property type="match status" value="1"/>
</dbReference>
<dbReference type="PRINTS" id="PR00305">
    <property type="entry name" value="1433ZETA"/>
</dbReference>
<dbReference type="SMART" id="SM00101">
    <property type="entry name" value="14_3_3"/>
    <property type="match status" value="1"/>
</dbReference>
<dbReference type="SUPFAM" id="SSF48445">
    <property type="entry name" value="14-3-3 protein"/>
    <property type="match status" value="1"/>
</dbReference>
<dbReference type="PROSITE" id="PS00796">
    <property type="entry name" value="1433_1"/>
    <property type="match status" value="1"/>
</dbReference>
<dbReference type="PROSITE" id="PS00797">
    <property type="entry name" value="1433_2"/>
    <property type="match status" value="1"/>
</dbReference>
<accession>P93211</accession>
<accession>Q947T0</accession>
<reference key="1">
    <citation type="journal article" date="1999" name="Plant Physiol.">
        <title>Fusicoccin, 14-3-3 proteins, and defense responses in tomato plants.</title>
        <authorList>
            <person name="Roberts M.R."/>
            <person name="Bowles D.J."/>
        </authorList>
    </citation>
    <scope>NUCLEOTIDE SEQUENCE [GENOMIC DNA]</scope>
    <source>
        <strain>cv. Moneymaker</strain>
        <tissue>Leaf</tissue>
    </source>
</reference>
<reference key="2">
    <citation type="submission" date="2002-08" db="EMBL/GenBank/DDBJ databases">
        <authorList>
            <person name="Roberts M.R."/>
        </authorList>
    </citation>
    <scope>SEQUENCE REVISION TO 3-4; 13-14; 18-20; 47; 57 AND 234</scope>
</reference>
<reference key="3">
    <citation type="journal article" date="2001" name="Plant Cell">
        <title>Tomato SP-interacting proteins define a conserved signaling system that regulates shoot architecture and flowering.</title>
        <authorList>
            <person name="Pnueli L."/>
            <person name="Gutfinger T."/>
            <person name="Hareven D."/>
            <person name="Ben-Naim O."/>
            <person name="Ron N."/>
            <person name="Adir N."/>
            <person name="Lifschitz E."/>
        </authorList>
    </citation>
    <scope>NUCLEOTIDE SEQUENCE [MRNA]</scope>
</reference>
<name>14336_SOLLC</name>
<feature type="chain" id="PRO_0000058686" description="14-3-3 protein 6">
    <location>
        <begin position="1"/>
        <end position="258"/>
    </location>
</feature>
<feature type="region of interest" description="Disordered" evidence="1">
    <location>
        <begin position="238"/>
        <end position="258"/>
    </location>
</feature>
<feature type="compositionally biased region" description="Basic and acidic residues" evidence="1">
    <location>
        <begin position="245"/>
        <end position="258"/>
    </location>
</feature>
<comment type="subunit">
    <text evidence="2">Homodimer.</text>
</comment>
<comment type="similarity">
    <text evidence="2">Belongs to the 14-3-3 family.</text>
</comment>
<protein>
    <recommendedName>
        <fullName>14-3-3 protein 6</fullName>
    </recommendedName>
</protein>